<protein>
    <recommendedName>
        <fullName evidence="1">ATP synthase subunit beta</fullName>
        <ecNumber evidence="1">7.1.2.2</ecNumber>
    </recommendedName>
    <alternativeName>
        <fullName evidence="1">ATP synthase F1 sector subunit beta</fullName>
    </alternativeName>
    <alternativeName>
        <fullName evidence="1">F-ATPase subunit beta</fullName>
    </alternativeName>
</protein>
<keyword id="KW-0066">ATP synthesis</keyword>
<keyword id="KW-0067">ATP-binding</keyword>
<keyword id="KW-0997">Cell inner membrane</keyword>
<keyword id="KW-1003">Cell membrane</keyword>
<keyword id="KW-0139">CF(1)</keyword>
<keyword id="KW-0375">Hydrogen ion transport</keyword>
<keyword id="KW-0406">Ion transport</keyword>
<keyword id="KW-0472">Membrane</keyword>
<keyword id="KW-0547">Nucleotide-binding</keyword>
<keyword id="KW-1278">Translocase</keyword>
<keyword id="KW-0813">Transport</keyword>
<proteinExistence type="inferred from homology"/>
<comment type="function">
    <text evidence="1">Produces ATP from ADP in the presence of a proton gradient across the membrane. The catalytic sites are hosted primarily by the beta subunits.</text>
</comment>
<comment type="catalytic activity">
    <reaction evidence="1">
        <text>ATP + H2O + 4 H(+)(in) = ADP + phosphate + 5 H(+)(out)</text>
        <dbReference type="Rhea" id="RHEA:57720"/>
        <dbReference type="ChEBI" id="CHEBI:15377"/>
        <dbReference type="ChEBI" id="CHEBI:15378"/>
        <dbReference type="ChEBI" id="CHEBI:30616"/>
        <dbReference type="ChEBI" id="CHEBI:43474"/>
        <dbReference type="ChEBI" id="CHEBI:456216"/>
        <dbReference type="EC" id="7.1.2.2"/>
    </reaction>
</comment>
<comment type="subunit">
    <text evidence="1">F-type ATPases have 2 components, CF(1) - the catalytic core - and CF(0) - the membrane proton channel. CF(1) has five subunits: alpha(3), beta(3), gamma(1), delta(1), epsilon(1). CF(0) has three main subunits: a(1), b(2) and c(9-12). The alpha and beta chains form an alternating ring which encloses part of the gamma chain. CF(1) is attached to CF(0) by a central stalk formed by the gamma and epsilon chains, while a peripheral stalk is formed by the delta and b chains.</text>
</comment>
<comment type="subcellular location">
    <subcellularLocation>
        <location evidence="1">Cell inner membrane</location>
        <topology evidence="1">Peripheral membrane protein</topology>
    </subcellularLocation>
</comment>
<comment type="similarity">
    <text evidence="1">Belongs to the ATPase alpha/beta chains family.</text>
</comment>
<gene>
    <name evidence="1" type="primary">atpD</name>
    <name type="ordered locus">PSPPH_5207</name>
</gene>
<feature type="chain" id="PRO_0000254342" description="ATP synthase subunit beta">
    <location>
        <begin position="1"/>
        <end position="459"/>
    </location>
</feature>
<feature type="binding site" evidence="1">
    <location>
        <begin position="149"/>
        <end position="156"/>
    </location>
    <ligand>
        <name>ATP</name>
        <dbReference type="ChEBI" id="CHEBI:30616"/>
    </ligand>
</feature>
<organism>
    <name type="scientific">Pseudomonas savastanoi pv. phaseolicola (strain 1448A / Race 6)</name>
    <name type="common">Pseudomonas syringae pv. phaseolicola (strain 1448A / Race 6)</name>
    <dbReference type="NCBI Taxonomy" id="264730"/>
    <lineage>
        <taxon>Bacteria</taxon>
        <taxon>Pseudomonadati</taxon>
        <taxon>Pseudomonadota</taxon>
        <taxon>Gammaproteobacteria</taxon>
        <taxon>Pseudomonadales</taxon>
        <taxon>Pseudomonadaceae</taxon>
        <taxon>Pseudomonas</taxon>
    </lineage>
</organism>
<evidence type="ECO:0000255" key="1">
    <source>
        <dbReference type="HAMAP-Rule" id="MF_01347"/>
    </source>
</evidence>
<name>ATPB_PSE14</name>
<sequence length="459" mass="49522">MSSGRIVQIIGAVIDVEFPRDSVPSIYNALEVQSAAGTTLEVQQQLGDGVVRTIAMGSTEGLKRGLEVTDSGAAISVPVGKATLGRIMDVLGNPIDEAGPIATEERWGIHRPAPSFAEQAGGNDLLETGIKVIDLVCPFTKGGKVGLFGGAGVGKTVNMMELIRNIAIEHSGYSVFAGVGERTREGNDFYHEMKDSNVLDKVALVYGQMNEPPGNRLRVALTGLTMAEKFRDEGNDVLLFVDNIYRYTLAGTEVSALLGRMPSAVGYQPTLAEEMGTLQERITSTKNGSITSIQAVYVPADDLTDPSPATTFAHLDATVVLSRDIASLGIYPAVDPLDSTSRQLDPNVIGQEHYDTARGVQYVLQRYKELKDIIAILGMDELSETDKQLVNRARKIQRFLSQPFFVAEVFTGASGKYVSLKDTIAGFKGILNGDYDHLPEQAFYMVGGIEEAIEKAKKL</sequence>
<reference key="1">
    <citation type="journal article" date="2005" name="J. Bacteriol.">
        <title>Whole-genome sequence analysis of Pseudomonas syringae pv. phaseolicola 1448A reveals divergence among pathovars in genes involved in virulence and transposition.</title>
        <authorList>
            <person name="Joardar V."/>
            <person name="Lindeberg M."/>
            <person name="Jackson R.W."/>
            <person name="Selengut J."/>
            <person name="Dodson R."/>
            <person name="Brinkac L.M."/>
            <person name="Daugherty S.C."/>
            <person name="DeBoy R.T."/>
            <person name="Durkin A.S."/>
            <person name="Gwinn Giglio M."/>
            <person name="Madupu R."/>
            <person name="Nelson W.C."/>
            <person name="Rosovitz M.J."/>
            <person name="Sullivan S.A."/>
            <person name="Crabtree J."/>
            <person name="Creasy T."/>
            <person name="Davidsen T.M."/>
            <person name="Haft D.H."/>
            <person name="Zafar N."/>
            <person name="Zhou L."/>
            <person name="Halpin R."/>
            <person name="Holley T."/>
            <person name="Khouri H.M."/>
            <person name="Feldblyum T.V."/>
            <person name="White O."/>
            <person name="Fraser C.M."/>
            <person name="Chatterjee A.K."/>
            <person name="Cartinhour S."/>
            <person name="Schneider D."/>
            <person name="Mansfield J.W."/>
            <person name="Collmer A."/>
            <person name="Buell R."/>
        </authorList>
    </citation>
    <scope>NUCLEOTIDE SEQUENCE [LARGE SCALE GENOMIC DNA]</scope>
    <source>
        <strain>1448A / Race 6</strain>
    </source>
</reference>
<accession>Q48BG5</accession>
<dbReference type="EC" id="7.1.2.2" evidence="1"/>
<dbReference type="EMBL" id="CP000058">
    <property type="protein sequence ID" value="AAZ33103.1"/>
    <property type="molecule type" value="Genomic_DNA"/>
</dbReference>
<dbReference type="RefSeq" id="WP_011169939.1">
    <property type="nucleotide sequence ID" value="NC_005773.3"/>
</dbReference>
<dbReference type="SMR" id="Q48BG5"/>
<dbReference type="KEGG" id="psp:PSPPH_5207"/>
<dbReference type="eggNOG" id="COG0055">
    <property type="taxonomic scope" value="Bacteria"/>
</dbReference>
<dbReference type="HOGENOM" id="CLU_022398_0_2_6"/>
<dbReference type="Proteomes" id="UP000000551">
    <property type="component" value="Chromosome"/>
</dbReference>
<dbReference type="GO" id="GO:0005886">
    <property type="term" value="C:plasma membrane"/>
    <property type="evidence" value="ECO:0007669"/>
    <property type="project" value="UniProtKB-SubCell"/>
</dbReference>
<dbReference type="GO" id="GO:0045259">
    <property type="term" value="C:proton-transporting ATP synthase complex"/>
    <property type="evidence" value="ECO:0007669"/>
    <property type="project" value="UniProtKB-KW"/>
</dbReference>
<dbReference type="GO" id="GO:0005524">
    <property type="term" value="F:ATP binding"/>
    <property type="evidence" value="ECO:0007669"/>
    <property type="project" value="UniProtKB-UniRule"/>
</dbReference>
<dbReference type="GO" id="GO:0016887">
    <property type="term" value="F:ATP hydrolysis activity"/>
    <property type="evidence" value="ECO:0007669"/>
    <property type="project" value="InterPro"/>
</dbReference>
<dbReference type="GO" id="GO:0046933">
    <property type="term" value="F:proton-transporting ATP synthase activity, rotational mechanism"/>
    <property type="evidence" value="ECO:0007669"/>
    <property type="project" value="UniProtKB-UniRule"/>
</dbReference>
<dbReference type="CDD" id="cd18110">
    <property type="entry name" value="ATP-synt_F1_beta_C"/>
    <property type="match status" value="1"/>
</dbReference>
<dbReference type="CDD" id="cd18115">
    <property type="entry name" value="ATP-synt_F1_beta_N"/>
    <property type="match status" value="1"/>
</dbReference>
<dbReference type="CDD" id="cd01133">
    <property type="entry name" value="F1-ATPase_beta_CD"/>
    <property type="match status" value="1"/>
</dbReference>
<dbReference type="FunFam" id="1.10.1140.10:FF:000001">
    <property type="entry name" value="ATP synthase subunit beta"/>
    <property type="match status" value="1"/>
</dbReference>
<dbReference type="FunFam" id="2.40.10.170:FF:000005">
    <property type="entry name" value="ATP synthase subunit beta"/>
    <property type="match status" value="1"/>
</dbReference>
<dbReference type="FunFam" id="3.40.50.300:FF:000004">
    <property type="entry name" value="ATP synthase subunit beta"/>
    <property type="match status" value="1"/>
</dbReference>
<dbReference type="Gene3D" id="2.40.10.170">
    <property type="match status" value="1"/>
</dbReference>
<dbReference type="Gene3D" id="1.10.1140.10">
    <property type="entry name" value="Bovine Mitochondrial F1-atpase, Atp Synthase Beta Chain, Chain D, domain 3"/>
    <property type="match status" value="1"/>
</dbReference>
<dbReference type="Gene3D" id="3.40.50.300">
    <property type="entry name" value="P-loop containing nucleotide triphosphate hydrolases"/>
    <property type="match status" value="1"/>
</dbReference>
<dbReference type="HAMAP" id="MF_01347">
    <property type="entry name" value="ATP_synth_beta_bact"/>
    <property type="match status" value="1"/>
</dbReference>
<dbReference type="InterPro" id="IPR003593">
    <property type="entry name" value="AAA+_ATPase"/>
</dbReference>
<dbReference type="InterPro" id="IPR055190">
    <property type="entry name" value="ATP-synt_VA_C"/>
</dbReference>
<dbReference type="InterPro" id="IPR005722">
    <property type="entry name" value="ATP_synth_F1_bsu"/>
</dbReference>
<dbReference type="InterPro" id="IPR020003">
    <property type="entry name" value="ATPase_a/bsu_AS"/>
</dbReference>
<dbReference type="InterPro" id="IPR050053">
    <property type="entry name" value="ATPase_alpha/beta_chains"/>
</dbReference>
<dbReference type="InterPro" id="IPR004100">
    <property type="entry name" value="ATPase_F1/V1/A1_a/bsu_N"/>
</dbReference>
<dbReference type="InterPro" id="IPR036121">
    <property type="entry name" value="ATPase_F1/V1/A1_a/bsu_N_sf"/>
</dbReference>
<dbReference type="InterPro" id="IPR000194">
    <property type="entry name" value="ATPase_F1/V1/A1_a/bsu_nucl-bd"/>
</dbReference>
<dbReference type="InterPro" id="IPR024034">
    <property type="entry name" value="ATPase_F1/V1_b/a_C"/>
</dbReference>
<dbReference type="InterPro" id="IPR027417">
    <property type="entry name" value="P-loop_NTPase"/>
</dbReference>
<dbReference type="NCBIfam" id="TIGR01039">
    <property type="entry name" value="atpD"/>
    <property type="match status" value="1"/>
</dbReference>
<dbReference type="PANTHER" id="PTHR15184">
    <property type="entry name" value="ATP SYNTHASE"/>
    <property type="match status" value="1"/>
</dbReference>
<dbReference type="PANTHER" id="PTHR15184:SF71">
    <property type="entry name" value="ATP SYNTHASE SUBUNIT BETA, MITOCHONDRIAL"/>
    <property type="match status" value="1"/>
</dbReference>
<dbReference type="Pfam" id="PF00006">
    <property type="entry name" value="ATP-synt_ab"/>
    <property type="match status" value="1"/>
</dbReference>
<dbReference type="Pfam" id="PF02874">
    <property type="entry name" value="ATP-synt_ab_N"/>
    <property type="match status" value="1"/>
</dbReference>
<dbReference type="Pfam" id="PF22919">
    <property type="entry name" value="ATP-synt_VA_C"/>
    <property type="match status" value="1"/>
</dbReference>
<dbReference type="SMART" id="SM00382">
    <property type="entry name" value="AAA"/>
    <property type="match status" value="1"/>
</dbReference>
<dbReference type="SUPFAM" id="SSF47917">
    <property type="entry name" value="C-terminal domain of alpha and beta subunits of F1 ATP synthase"/>
    <property type="match status" value="1"/>
</dbReference>
<dbReference type="SUPFAM" id="SSF50615">
    <property type="entry name" value="N-terminal domain of alpha and beta subunits of F1 ATP synthase"/>
    <property type="match status" value="1"/>
</dbReference>
<dbReference type="SUPFAM" id="SSF52540">
    <property type="entry name" value="P-loop containing nucleoside triphosphate hydrolases"/>
    <property type="match status" value="1"/>
</dbReference>
<dbReference type="PROSITE" id="PS00152">
    <property type="entry name" value="ATPASE_ALPHA_BETA"/>
    <property type="match status" value="1"/>
</dbReference>